<proteinExistence type="evidence at protein level"/>
<sequence length="422" mass="49020">MSKRNQARKVGRFMTMPNDPFKYSFDRLEDVADHISDVLRCPITIEDVNHKLLAYSTHSDCTDPARTSTIIGRRVPEKVINKLWKDGTIPALLKTDQPIRVKQIDEVGLSNRVAISIWKNKQVLGFIWALEIQKTLSDEDLLTLQMAAKAVKNKLLKLQIRKTKNEERSQEFFWKMLTGHIHQEDDMADGFHKLGMAAPSEFSVMIIRINGELTEKIEQQLQYLQETTQQVYVLLATVDSNELIILTSPKTDHPFQDLKQFALSTQKQLKERYKIEDVSIAFGGIYNSISFVSRSYQEALSVLKTKERFAEETKHLFSFSELGIYQYLDVLNEKRKQAGHYNYSLSKLEQYDRDHQSNMVETLERFIEADSNVNTASKLLNIHVNTLNYRLKRISQIAEIDLKNVNQKFTIYLDIKLRHMDL</sequence>
<feature type="chain" id="PRO_0000360161" description="DNA-binding transcriptional activator AdeR">
    <location>
        <begin position="1"/>
        <end position="422"/>
    </location>
</feature>
<feature type="sequence conflict" description="In Ref. 1; CAB04774." evidence="3" ref="1">
    <original>LRHMDL</original>
    <variation>PSGTWICEISQIHVFLFS</variation>
    <location>
        <begin position="417"/>
        <end position="422"/>
    </location>
</feature>
<evidence type="ECO:0000269" key="1">
    <source>
    </source>
</evidence>
<evidence type="ECO:0000303" key="2">
    <source>
    </source>
</evidence>
<evidence type="ECO:0000305" key="3"/>
<organism>
    <name type="scientific">Bacillus subtilis (strain 168)</name>
    <dbReference type="NCBI Taxonomy" id="224308"/>
    <lineage>
        <taxon>Bacteria</taxon>
        <taxon>Bacillati</taxon>
        <taxon>Bacillota</taxon>
        <taxon>Bacilli</taxon>
        <taxon>Bacillales</taxon>
        <taxon>Bacillaceae</taxon>
        <taxon>Bacillus</taxon>
    </lineage>
</organism>
<protein>
    <recommendedName>
        <fullName>DNA-binding transcriptional activator AdeR</fullName>
    </recommendedName>
    <alternativeName>
        <fullName>PucR-type transcriptional activator AdeR</fullName>
    </alternativeName>
</protein>
<gene>
    <name evidence="2" type="primary">adeR</name>
    <name type="synonym">yukF</name>
    <name type="ordered locus">BSU31920</name>
</gene>
<comment type="function">
    <text evidence="1">Activates ald expression in response to alanine availability and is important for normal sporulation in B.subtilis.</text>
</comment>
<comment type="disruption phenotype">
    <text evidence="1">Disruption of adeR causes a sporulation defect.</text>
</comment>
<comment type="similarity">
    <text evidence="3">Belongs to the CdaR family.</text>
</comment>
<keyword id="KW-0010">Activator</keyword>
<keyword id="KW-0238">DNA-binding</keyword>
<keyword id="KW-1185">Reference proteome</keyword>
<keyword id="KW-0749">Sporulation</keyword>
<keyword id="KW-0804">Transcription</keyword>
<keyword id="KW-0805">Transcription regulation</keyword>
<reference key="1">
    <citation type="journal article" date="1997" name="Microbiology">
        <title>A 12kb nucleotide sequence containing the alanine dehydrogenase gene at 279 degree on the Bacillus subtilis chromosome.</title>
        <authorList>
            <person name="Oudega B."/>
            <person name="Vandenbol M."/>
            <person name="Koningstein G."/>
        </authorList>
    </citation>
    <scope>NUCLEOTIDE SEQUENCE [GENOMIC DNA]</scope>
    <source>
        <strain>168</strain>
    </source>
</reference>
<reference key="2">
    <citation type="journal article" date="1997" name="Nature">
        <title>The complete genome sequence of the Gram-positive bacterium Bacillus subtilis.</title>
        <authorList>
            <person name="Kunst F."/>
            <person name="Ogasawara N."/>
            <person name="Moszer I."/>
            <person name="Albertini A.M."/>
            <person name="Alloni G."/>
            <person name="Azevedo V."/>
            <person name="Bertero M.G."/>
            <person name="Bessieres P."/>
            <person name="Bolotin A."/>
            <person name="Borchert S."/>
            <person name="Borriss R."/>
            <person name="Boursier L."/>
            <person name="Brans A."/>
            <person name="Braun M."/>
            <person name="Brignell S.C."/>
            <person name="Bron S."/>
            <person name="Brouillet S."/>
            <person name="Bruschi C.V."/>
            <person name="Caldwell B."/>
            <person name="Capuano V."/>
            <person name="Carter N.M."/>
            <person name="Choi S.-K."/>
            <person name="Codani J.-J."/>
            <person name="Connerton I.F."/>
            <person name="Cummings N.J."/>
            <person name="Daniel R.A."/>
            <person name="Denizot F."/>
            <person name="Devine K.M."/>
            <person name="Duesterhoeft A."/>
            <person name="Ehrlich S.D."/>
            <person name="Emmerson P.T."/>
            <person name="Entian K.-D."/>
            <person name="Errington J."/>
            <person name="Fabret C."/>
            <person name="Ferrari E."/>
            <person name="Foulger D."/>
            <person name="Fritz C."/>
            <person name="Fujita M."/>
            <person name="Fujita Y."/>
            <person name="Fuma S."/>
            <person name="Galizzi A."/>
            <person name="Galleron N."/>
            <person name="Ghim S.-Y."/>
            <person name="Glaser P."/>
            <person name="Goffeau A."/>
            <person name="Golightly E.J."/>
            <person name="Grandi G."/>
            <person name="Guiseppi G."/>
            <person name="Guy B.J."/>
            <person name="Haga K."/>
            <person name="Haiech J."/>
            <person name="Harwood C.R."/>
            <person name="Henaut A."/>
            <person name="Hilbert H."/>
            <person name="Holsappel S."/>
            <person name="Hosono S."/>
            <person name="Hullo M.-F."/>
            <person name="Itaya M."/>
            <person name="Jones L.-M."/>
            <person name="Joris B."/>
            <person name="Karamata D."/>
            <person name="Kasahara Y."/>
            <person name="Klaerr-Blanchard M."/>
            <person name="Klein C."/>
            <person name="Kobayashi Y."/>
            <person name="Koetter P."/>
            <person name="Koningstein G."/>
            <person name="Krogh S."/>
            <person name="Kumano M."/>
            <person name="Kurita K."/>
            <person name="Lapidus A."/>
            <person name="Lardinois S."/>
            <person name="Lauber J."/>
            <person name="Lazarevic V."/>
            <person name="Lee S.-M."/>
            <person name="Levine A."/>
            <person name="Liu H."/>
            <person name="Masuda S."/>
            <person name="Mauel C."/>
            <person name="Medigue C."/>
            <person name="Medina N."/>
            <person name="Mellado R.P."/>
            <person name="Mizuno M."/>
            <person name="Moestl D."/>
            <person name="Nakai S."/>
            <person name="Noback M."/>
            <person name="Noone D."/>
            <person name="O'Reilly M."/>
            <person name="Ogawa K."/>
            <person name="Ogiwara A."/>
            <person name="Oudega B."/>
            <person name="Park S.-H."/>
            <person name="Parro V."/>
            <person name="Pohl T.M."/>
            <person name="Portetelle D."/>
            <person name="Porwollik S."/>
            <person name="Prescott A.M."/>
            <person name="Presecan E."/>
            <person name="Pujic P."/>
            <person name="Purnelle B."/>
            <person name="Rapoport G."/>
            <person name="Rey M."/>
            <person name="Reynolds S."/>
            <person name="Rieger M."/>
            <person name="Rivolta C."/>
            <person name="Rocha E."/>
            <person name="Roche B."/>
            <person name="Rose M."/>
            <person name="Sadaie Y."/>
            <person name="Sato T."/>
            <person name="Scanlan E."/>
            <person name="Schleich S."/>
            <person name="Schroeter R."/>
            <person name="Scoffone F."/>
            <person name="Sekiguchi J."/>
            <person name="Sekowska A."/>
            <person name="Seror S.J."/>
            <person name="Serror P."/>
            <person name="Shin B.-S."/>
            <person name="Soldo B."/>
            <person name="Sorokin A."/>
            <person name="Tacconi E."/>
            <person name="Takagi T."/>
            <person name="Takahashi H."/>
            <person name="Takemaru K."/>
            <person name="Takeuchi M."/>
            <person name="Tamakoshi A."/>
            <person name="Tanaka T."/>
            <person name="Terpstra P."/>
            <person name="Tognoni A."/>
            <person name="Tosato V."/>
            <person name="Uchiyama S."/>
            <person name="Vandenbol M."/>
            <person name="Vannier F."/>
            <person name="Vassarotti A."/>
            <person name="Viari A."/>
            <person name="Wambutt R."/>
            <person name="Wedler E."/>
            <person name="Wedler H."/>
            <person name="Weitzenegger T."/>
            <person name="Winters P."/>
            <person name="Wipat A."/>
            <person name="Yamamoto H."/>
            <person name="Yamane K."/>
            <person name="Yasumoto K."/>
            <person name="Yata K."/>
            <person name="Yoshida K."/>
            <person name="Yoshikawa H.-F."/>
            <person name="Zumstein E."/>
            <person name="Yoshikawa H."/>
            <person name="Danchin A."/>
        </authorList>
    </citation>
    <scope>NUCLEOTIDE SEQUENCE [LARGE SCALE GENOMIC DNA]</scope>
    <source>
        <strain>168</strain>
    </source>
</reference>
<reference key="3">
    <citation type="journal article" date="2009" name="Microbiology">
        <title>From a consortium sequence to a unified sequence: the Bacillus subtilis 168 reference genome a decade later.</title>
        <authorList>
            <person name="Barbe V."/>
            <person name="Cruveiller S."/>
            <person name="Kunst F."/>
            <person name="Lenoble P."/>
            <person name="Meurice G."/>
            <person name="Sekowska A."/>
            <person name="Vallenet D."/>
            <person name="Wang T."/>
            <person name="Moszer I."/>
            <person name="Medigue C."/>
            <person name="Danchin A."/>
        </authorList>
    </citation>
    <scope>SEQUENCE REVISION TO C-TERMINUS</scope>
</reference>
<reference key="4">
    <citation type="journal article" date="2012" name="J. Bacteriol.">
        <title>AdeR, a PucR-type transcription factor, activates expression of L-alanine dehydrogenase and is required for sporulation of Bacillus subtilis.</title>
        <authorList>
            <person name="Lin T.H."/>
            <person name="Wei G.T."/>
            <person name="Su C.C."/>
            <person name="Shaw G.C."/>
        </authorList>
    </citation>
    <scope>FUNCTION</scope>
    <scope>DISRUPTION PHENOTYPE</scope>
    <scope>NOMENCLATURE</scope>
    <scope>DNA-BINDING</scope>
    <source>
        <strain>168</strain>
    </source>
</reference>
<dbReference type="EMBL" id="Z82015">
    <property type="protein sequence ID" value="CAB04774.1"/>
    <property type="molecule type" value="Genomic_DNA"/>
</dbReference>
<dbReference type="EMBL" id="AL009126">
    <property type="protein sequence ID" value="CAB15180.2"/>
    <property type="molecule type" value="Genomic_DNA"/>
</dbReference>
<dbReference type="PIR" id="H70013">
    <property type="entry name" value="H70013"/>
</dbReference>
<dbReference type="RefSeq" id="NP_391070.2">
    <property type="nucleotide sequence ID" value="NC_000964.3"/>
</dbReference>
<dbReference type="RefSeq" id="WP_010886604.1">
    <property type="nucleotide sequence ID" value="NZ_OZ025638.1"/>
</dbReference>
<dbReference type="SMR" id="P71073"/>
<dbReference type="FunCoup" id="P71073">
    <property type="interactions" value="50"/>
</dbReference>
<dbReference type="STRING" id="224308.BSU31920"/>
<dbReference type="PaxDb" id="224308-BSU31920"/>
<dbReference type="EnsemblBacteria" id="CAB15180">
    <property type="protein sequence ID" value="CAB15180"/>
    <property type="gene ID" value="BSU_31920"/>
</dbReference>
<dbReference type="GeneID" id="938860"/>
<dbReference type="KEGG" id="bsu:BSU31920"/>
<dbReference type="PATRIC" id="fig|224308.43.peg.3341"/>
<dbReference type="eggNOG" id="COG2508">
    <property type="taxonomic scope" value="Bacteria"/>
</dbReference>
<dbReference type="eggNOG" id="COG4465">
    <property type="taxonomic scope" value="Bacteria"/>
</dbReference>
<dbReference type="InParanoid" id="P71073"/>
<dbReference type="OrthoDB" id="9792148at2"/>
<dbReference type="PhylomeDB" id="P71073"/>
<dbReference type="BioCyc" id="BSUB:BSU31920-MONOMER"/>
<dbReference type="Proteomes" id="UP000001570">
    <property type="component" value="Chromosome"/>
</dbReference>
<dbReference type="GO" id="GO:0003677">
    <property type="term" value="F:DNA binding"/>
    <property type="evidence" value="ECO:0007669"/>
    <property type="project" value="UniProtKB-KW"/>
</dbReference>
<dbReference type="GO" id="GO:0003700">
    <property type="term" value="F:DNA-binding transcription factor activity"/>
    <property type="evidence" value="ECO:0000318"/>
    <property type="project" value="GO_Central"/>
</dbReference>
<dbReference type="GO" id="GO:0005525">
    <property type="term" value="F:GTP binding"/>
    <property type="evidence" value="ECO:0007669"/>
    <property type="project" value="InterPro"/>
</dbReference>
<dbReference type="GO" id="GO:0006351">
    <property type="term" value="P:DNA-templated transcription"/>
    <property type="evidence" value="ECO:0000315"/>
    <property type="project" value="UniProtKB"/>
</dbReference>
<dbReference type="GO" id="GO:0045893">
    <property type="term" value="P:positive regulation of DNA-templated transcription"/>
    <property type="evidence" value="ECO:0000318"/>
    <property type="project" value="GO_Central"/>
</dbReference>
<dbReference type="GO" id="GO:0043934">
    <property type="term" value="P:sporulation"/>
    <property type="evidence" value="ECO:0000315"/>
    <property type="project" value="UniProtKB"/>
</dbReference>
<dbReference type="GO" id="GO:0030435">
    <property type="term" value="P:sporulation resulting in formation of a cellular spore"/>
    <property type="evidence" value="ECO:0007669"/>
    <property type="project" value="UniProtKB-KW"/>
</dbReference>
<dbReference type="Gene3D" id="3.30.450.40">
    <property type="match status" value="1"/>
</dbReference>
<dbReference type="Gene3D" id="1.10.10.2840">
    <property type="entry name" value="PucR C-terminal helix-turn-helix domain"/>
    <property type="match status" value="1"/>
</dbReference>
<dbReference type="InterPro" id="IPR051448">
    <property type="entry name" value="CdaR-like_regulators"/>
</dbReference>
<dbReference type="InterPro" id="IPR041522">
    <property type="entry name" value="CdaR_GGDEF"/>
</dbReference>
<dbReference type="InterPro" id="IPR029016">
    <property type="entry name" value="GAF-like_dom_sf"/>
</dbReference>
<dbReference type="InterPro" id="IPR025736">
    <property type="entry name" value="PucR_C-HTH_dom"/>
</dbReference>
<dbReference type="InterPro" id="IPR042070">
    <property type="entry name" value="PucR_C-HTH_sf"/>
</dbReference>
<dbReference type="InterPro" id="IPR010312">
    <property type="entry name" value="Transc_reg_CodY_N"/>
</dbReference>
<dbReference type="PANTHER" id="PTHR33744">
    <property type="entry name" value="CARBOHYDRATE DIACID REGULATOR"/>
    <property type="match status" value="1"/>
</dbReference>
<dbReference type="PANTHER" id="PTHR33744:SF1">
    <property type="entry name" value="DNA-BINDING TRANSCRIPTIONAL ACTIVATOR ADER"/>
    <property type="match status" value="1"/>
</dbReference>
<dbReference type="Pfam" id="PF06018">
    <property type="entry name" value="CodY"/>
    <property type="match status" value="1"/>
</dbReference>
<dbReference type="Pfam" id="PF17853">
    <property type="entry name" value="GGDEF_2"/>
    <property type="match status" value="1"/>
</dbReference>
<dbReference type="Pfam" id="PF13556">
    <property type="entry name" value="HTH_30"/>
    <property type="match status" value="1"/>
</dbReference>
<accession>P71073</accession>
<accession>Q795L1</accession>
<name>ADER_BACSU</name>